<evidence type="ECO:0000255" key="1">
    <source>
        <dbReference type="HAMAP-Rule" id="MF_01203"/>
    </source>
</evidence>
<organism>
    <name type="scientific">Escherichia coli O127:H6 (strain E2348/69 / EPEC)</name>
    <dbReference type="NCBI Taxonomy" id="574521"/>
    <lineage>
        <taxon>Bacteria</taxon>
        <taxon>Pseudomonadati</taxon>
        <taxon>Pseudomonadota</taxon>
        <taxon>Gammaproteobacteria</taxon>
        <taxon>Enterobacterales</taxon>
        <taxon>Enterobacteriaceae</taxon>
        <taxon>Escherichia</taxon>
    </lineage>
</organism>
<protein>
    <recommendedName>
        <fullName evidence="1">Voltage-gated ClC-type chloride channel ClcB</fullName>
    </recommendedName>
</protein>
<keyword id="KW-0997">Cell inner membrane</keyword>
<keyword id="KW-1003">Cell membrane</keyword>
<keyword id="KW-0868">Chloride</keyword>
<keyword id="KW-0869">Chloride channel</keyword>
<keyword id="KW-0407">Ion channel</keyword>
<keyword id="KW-0406">Ion transport</keyword>
<keyword id="KW-0472">Membrane</keyword>
<keyword id="KW-1185">Reference proteome</keyword>
<keyword id="KW-0812">Transmembrane</keyword>
<keyword id="KW-1133">Transmembrane helix</keyword>
<keyword id="KW-0813">Transport</keyword>
<keyword id="KW-0851">Voltage-gated channel</keyword>
<dbReference type="EMBL" id="FM180568">
    <property type="protein sequence ID" value="CAS09224.1"/>
    <property type="molecule type" value="Genomic_DNA"/>
</dbReference>
<dbReference type="SMR" id="B7URT1"/>
<dbReference type="KEGG" id="ecg:E2348C_1676"/>
<dbReference type="HOGENOM" id="CLU_015263_5_2_6"/>
<dbReference type="Proteomes" id="UP000008205">
    <property type="component" value="Chromosome"/>
</dbReference>
<dbReference type="GO" id="GO:0034707">
    <property type="term" value="C:chloride channel complex"/>
    <property type="evidence" value="ECO:0007669"/>
    <property type="project" value="UniProtKB-KW"/>
</dbReference>
<dbReference type="GO" id="GO:0005886">
    <property type="term" value="C:plasma membrane"/>
    <property type="evidence" value="ECO:0007669"/>
    <property type="project" value="UniProtKB-SubCell"/>
</dbReference>
<dbReference type="GO" id="GO:0005247">
    <property type="term" value="F:voltage-gated chloride channel activity"/>
    <property type="evidence" value="ECO:0007669"/>
    <property type="project" value="UniProtKB-UniRule"/>
</dbReference>
<dbReference type="GO" id="GO:0010447">
    <property type="term" value="P:response to acidic pH"/>
    <property type="evidence" value="ECO:0007669"/>
    <property type="project" value="InterPro"/>
</dbReference>
<dbReference type="CDD" id="cd00400">
    <property type="entry name" value="Voltage_gated_ClC"/>
    <property type="match status" value="1"/>
</dbReference>
<dbReference type="FunFam" id="1.10.3080.10:FF:000010">
    <property type="entry name" value="Voltage-gated ClC-type chloride channel ClcB"/>
    <property type="match status" value="1"/>
</dbReference>
<dbReference type="Gene3D" id="1.10.3080.10">
    <property type="entry name" value="Clc chloride channel"/>
    <property type="match status" value="1"/>
</dbReference>
<dbReference type="HAMAP" id="MF_01203">
    <property type="entry name" value="CLC_ClcB"/>
    <property type="match status" value="1"/>
</dbReference>
<dbReference type="InterPro" id="IPR014743">
    <property type="entry name" value="Cl-channel_core"/>
</dbReference>
<dbReference type="InterPro" id="IPR023790">
    <property type="entry name" value="Cl-channel_volt-gated_ClcB"/>
</dbReference>
<dbReference type="InterPro" id="IPR001807">
    <property type="entry name" value="ClC"/>
</dbReference>
<dbReference type="InterPro" id="IPR050368">
    <property type="entry name" value="ClC-type_chloride_channel"/>
</dbReference>
<dbReference type="NCBIfam" id="NF002437">
    <property type="entry name" value="PRK01610.1"/>
    <property type="match status" value="1"/>
</dbReference>
<dbReference type="PANTHER" id="PTHR43427">
    <property type="entry name" value="CHLORIDE CHANNEL PROTEIN CLC-E"/>
    <property type="match status" value="1"/>
</dbReference>
<dbReference type="PANTHER" id="PTHR43427:SF6">
    <property type="entry name" value="CHLORIDE CHANNEL PROTEIN CLC-E"/>
    <property type="match status" value="1"/>
</dbReference>
<dbReference type="Pfam" id="PF00654">
    <property type="entry name" value="Voltage_CLC"/>
    <property type="match status" value="1"/>
</dbReference>
<dbReference type="PRINTS" id="PR00762">
    <property type="entry name" value="CLCHANNEL"/>
</dbReference>
<dbReference type="SUPFAM" id="SSF81340">
    <property type="entry name" value="Clc chloride channel"/>
    <property type="match status" value="1"/>
</dbReference>
<feature type="chain" id="PRO_1000164646" description="Voltage-gated ClC-type chloride channel ClcB">
    <location>
        <begin position="1"/>
        <end position="418"/>
    </location>
</feature>
<feature type="transmembrane region" description="Helical" evidence="1">
    <location>
        <begin position="5"/>
        <end position="25"/>
    </location>
</feature>
<feature type="transmembrane region" description="Helical" evidence="1">
    <location>
        <begin position="54"/>
        <end position="74"/>
    </location>
</feature>
<feature type="transmembrane region" description="Helical" evidence="1">
    <location>
        <begin position="146"/>
        <end position="166"/>
    </location>
</feature>
<feature type="transmembrane region" description="Helical" evidence="1">
    <location>
        <begin position="168"/>
        <end position="188"/>
    </location>
</feature>
<feature type="transmembrane region" description="Helical" evidence="1">
    <location>
        <begin position="222"/>
        <end position="242"/>
    </location>
</feature>
<feature type="transmembrane region" description="Helical" evidence="1">
    <location>
        <begin position="258"/>
        <end position="278"/>
    </location>
</feature>
<feature type="transmembrane region" description="Helical" evidence="1">
    <location>
        <begin position="291"/>
        <end position="311"/>
    </location>
</feature>
<feature type="transmembrane region" description="Helical" evidence="1">
    <location>
        <begin position="316"/>
        <end position="336"/>
    </location>
</feature>
<feature type="transmembrane region" description="Helical" evidence="1">
    <location>
        <begin position="352"/>
        <end position="372"/>
    </location>
</feature>
<feature type="transmembrane region" description="Helical" evidence="1">
    <location>
        <begin position="380"/>
        <end position="400"/>
    </location>
</feature>
<reference key="1">
    <citation type="journal article" date="2009" name="J. Bacteriol.">
        <title>Complete genome sequence and comparative genome analysis of enteropathogenic Escherichia coli O127:H6 strain E2348/69.</title>
        <authorList>
            <person name="Iguchi A."/>
            <person name="Thomson N.R."/>
            <person name="Ogura Y."/>
            <person name="Saunders D."/>
            <person name="Ooka T."/>
            <person name="Henderson I.R."/>
            <person name="Harris D."/>
            <person name="Asadulghani M."/>
            <person name="Kurokawa K."/>
            <person name="Dean P."/>
            <person name="Kenny B."/>
            <person name="Quail M.A."/>
            <person name="Thurston S."/>
            <person name="Dougan G."/>
            <person name="Hayashi T."/>
            <person name="Parkhill J."/>
            <person name="Frankel G."/>
        </authorList>
    </citation>
    <scope>NUCLEOTIDE SEQUENCE [LARGE SCALE GENOMIC DNA]</scope>
    <source>
        <strain>E2348/69 / EPEC</strain>
    </source>
</reference>
<sequence length="418" mass="44145">MFRRLLIATVVGILAAFAVAGFRHAMLLLEWLFLNNDSGSLVNAATNLSPWRRLLTPALGGLAAGLLLMGWQKFTQQRPHAPTDYMEALQTDGQFDYAASLVKSLASLLVVTSGSAIGREGAMILLAALAASCFAQRFTPRQEWKLWIACGAAAGMAAAYRAPLAGSLFIAEVLFGTMMLASLGPVIISAVVALLVSNLINHSDALLYSVQLSVTVQARDYALIISTGVLAGLCGPLLLTLMNACHRGFVSLKLAPPWQLALGGLIVGLLSLFTPAVWGNGYSTVQSFLTAPPLLMIIAGIFLCKLCAVLASSGSGAPGGVFTPTLFIGLAIGMLYGRSLGLWFPDGEEITLLLGLTGMATLLAATTHAPIMSTLMICEMTGEYQLLPGLLIACVIASVISRTLHRDSIYRQHTAKHS</sequence>
<name>CLCB_ECO27</name>
<accession>B7URT1</accession>
<proteinExistence type="inferred from homology"/>
<gene>
    <name evidence="1" type="primary">clcB</name>
    <name type="ordered locus">E2348C_1676</name>
</gene>
<comment type="function">
    <text evidence="1">Probably acts as an electrical shunt for an outwardly-directed proton pump that is linked to amino acid decarboxylation, as part of the extreme acid resistance (XAR) response.</text>
</comment>
<comment type="subcellular location">
    <subcellularLocation>
        <location evidence="1">Cell inner membrane</location>
        <topology evidence="1">Multi-pass membrane protein</topology>
    </subcellularLocation>
</comment>
<comment type="similarity">
    <text evidence="1">Belongs to the chloride channel (TC 2.A.49) family. ClcB subfamily.</text>
</comment>